<reference key="1">
    <citation type="journal article" date="2011" name="J. Bacteriol.">
        <title>Comparative genomics of 28 Salmonella enterica isolates: evidence for CRISPR-mediated adaptive sublineage evolution.</title>
        <authorList>
            <person name="Fricke W.F."/>
            <person name="Mammel M.K."/>
            <person name="McDermott P.F."/>
            <person name="Tartera C."/>
            <person name="White D.G."/>
            <person name="Leclerc J.E."/>
            <person name="Ravel J."/>
            <person name="Cebula T.A."/>
        </authorList>
    </citation>
    <scope>NUCLEOTIDE SEQUENCE [LARGE SCALE GENOMIC DNA]</scope>
    <source>
        <strain>SL254</strain>
    </source>
</reference>
<comment type="function">
    <text evidence="1">Specifically methylates the cytosine at position 1407 (m5C1407) of 16S rRNA.</text>
</comment>
<comment type="catalytic activity">
    <reaction evidence="1">
        <text>cytidine(1407) in 16S rRNA + S-adenosyl-L-methionine = 5-methylcytidine(1407) in 16S rRNA + S-adenosyl-L-homocysteine + H(+)</text>
        <dbReference type="Rhea" id="RHEA:42756"/>
        <dbReference type="Rhea" id="RHEA-COMP:10223"/>
        <dbReference type="Rhea" id="RHEA-COMP:10224"/>
        <dbReference type="ChEBI" id="CHEBI:15378"/>
        <dbReference type="ChEBI" id="CHEBI:57856"/>
        <dbReference type="ChEBI" id="CHEBI:59789"/>
        <dbReference type="ChEBI" id="CHEBI:74483"/>
        <dbReference type="ChEBI" id="CHEBI:82748"/>
        <dbReference type="EC" id="2.1.1.178"/>
    </reaction>
</comment>
<comment type="subcellular location">
    <subcellularLocation>
        <location evidence="1">Cytoplasm</location>
    </subcellularLocation>
</comment>
<comment type="similarity">
    <text evidence="1">Belongs to the class I-like SAM-binding methyltransferase superfamily. RsmB/NOP family.</text>
</comment>
<comment type="sequence caution" evidence="2">
    <conflict type="erroneous initiation">
        <sequence resource="EMBL-CDS" id="ACF62994"/>
    </conflict>
</comment>
<gene>
    <name evidence="1" type="primary">rsmF</name>
    <name type="ordered locus">SNSL254_A1989</name>
</gene>
<proteinExistence type="inferred from homology"/>
<organism>
    <name type="scientific">Salmonella newport (strain SL254)</name>
    <dbReference type="NCBI Taxonomy" id="423368"/>
    <lineage>
        <taxon>Bacteria</taxon>
        <taxon>Pseudomonadati</taxon>
        <taxon>Pseudomonadota</taxon>
        <taxon>Gammaproteobacteria</taxon>
        <taxon>Enterobacterales</taxon>
        <taxon>Enterobacteriaceae</taxon>
        <taxon>Salmonella</taxon>
    </lineage>
</organism>
<name>RSMF_SALNS</name>
<keyword id="KW-0963">Cytoplasm</keyword>
<keyword id="KW-0489">Methyltransferase</keyword>
<keyword id="KW-0694">RNA-binding</keyword>
<keyword id="KW-0698">rRNA processing</keyword>
<keyword id="KW-0949">S-adenosyl-L-methionine</keyword>
<keyword id="KW-0808">Transferase</keyword>
<dbReference type="EC" id="2.1.1.178" evidence="1"/>
<dbReference type="EMBL" id="CP001113">
    <property type="protein sequence ID" value="ACF62994.1"/>
    <property type="status" value="ALT_INIT"/>
    <property type="molecule type" value="Genomic_DNA"/>
</dbReference>
<dbReference type="RefSeq" id="WP_001670762.1">
    <property type="nucleotide sequence ID" value="NZ_CCMR01000003.1"/>
</dbReference>
<dbReference type="SMR" id="B4SV89"/>
<dbReference type="KEGG" id="see:SNSL254_A1989"/>
<dbReference type="HOGENOM" id="CLU_005316_6_2_6"/>
<dbReference type="Proteomes" id="UP000008824">
    <property type="component" value="Chromosome"/>
</dbReference>
<dbReference type="GO" id="GO:0005737">
    <property type="term" value="C:cytoplasm"/>
    <property type="evidence" value="ECO:0007669"/>
    <property type="project" value="UniProtKB-SubCell"/>
</dbReference>
<dbReference type="GO" id="GO:0003723">
    <property type="term" value="F:RNA binding"/>
    <property type="evidence" value="ECO:0007669"/>
    <property type="project" value="UniProtKB-KW"/>
</dbReference>
<dbReference type="GO" id="GO:0009383">
    <property type="term" value="F:rRNA (cytosine-C5-)-methyltransferase activity"/>
    <property type="evidence" value="ECO:0007669"/>
    <property type="project" value="TreeGrafter"/>
</dbReference>
<dbReference type="GO" id="GO:0070475">
    <property type="term" value="P:rRNA base methylation"/>
    <property type="evidence" value="ECO:0007669"/>
    <property type="project" value="TreeGrafter"/>
</dbReference>
<dbReference type="CDD" id="cd02440">
    <property type="entry name" value="AdoMet_MTases"/>
    <property type="match status" value="1"/>
</dbReference>
<dbReference type="FunFam" id="3.10.450.720:FF:000001">
    <property type="entry name" value="Ribosomal RNA small subunit methyltransferase F"/>
    <property type="match status" value="1"/>
</dbReference>
<dbReference type="FunFam" id="3.40.50.150:FF:000079">
    <property type="entry name" value="Ribosomal RNA small subunit methyltransferase F"/>
    <property type="match status" value="1"/>
</dbReference>
<dbReference type="Gene3D" id="3.10.450.720">
    <property type="match status" value="1"/>
</dbReference>
<dbReference type="Gene3D" id="3.40.50.150">
    <property type="entry name" value="Vaccinia Virus protein VP39"/>
    <property type="match status" value="1"/>
</dbReference>
<dbReference type="HAMAP" id="MF_01579">
    <property type="entry name" value="16SrRNA_methyltr_F"/>
    <property type="match status" value="1"/>
</dbReference>
<dbReference type="InterPro" id="IPR031341">
    <property type="entry name" value="Methyltr_RsmF_N"/>
</dbReference>
<dbReference type="InterPro" id="IPR049560">
    <property type="entry name" value="MeTrfase_RsmB-F_NOP2_cat"/>
</dbReference>
<dbReference type="InterPro" id="IPR001678">
    <property type="entry name" value="MeTrfase_RsmB-F_NOP2_dom"/>
</dbReference>
<dbReference type="InterPro" id="IPR027391">
    <property type="entry name" value="Nol1_Nop2_Fmu_2"/>
</dbReference>
<dbReference type="InterPro" id="IPR011023">
    <property type="entry name" value="Nop2p"/>
</dbReference>
<dbReference type="InterPro" id="IPR023267">
    <property type="entry name" value="RCMT"/>
</dbReference>
<dbReference type="InterPro" id="IPR023545">
    <property type="entry name" value="rRNA_ssu_MeTfrase_F"/>
</dbReference>
<dbReference type="InterPro" id="IPR018314">
    <property type="entry name" value="RsmB/NOL1/NOP2-like_CS"/>
</dbReference>
<dbReference type="InterPro" id="IPR029063">
    <property type="entry name" value="SAM-dependent_MTases_sf"/>
</dbReference>
<dbReference type="InterPro" id="IPR048457">
    <property type="entry name" value="YebU_pre-PUA_dom"/>
</dbReference>
<dbReference type="NCBIfam" id="TIGR00446">
    <property type="entry name" value="nop2p"/>
    <property type="match status" value="1"/>
</dbReference>
<dbReference type="NCBIfam" id="NF008898">
    <property type="entry name" value="PRK11933.1"/>
    <property type="match status" value="1"/>
</dbReference>
<dbReference type="PANTHER" id="PTHR22807:SF30">
    <property type="entry name" value="28S RRNA (CYTOSINE(4447)-C(5))-METHYLTRANSFERASE-RELATED"/>
    <property type="match status" value="1"/>
</dbReference>
<dbReference type="PANTHER" id="PTHR22807">
    <property type="entry name" value="NOP2 YEAST -RELATED NOL1/NOP2/FMU SUN DOMAIN-CONTAINING"/>
    <property type="match status" value="1"/>
</dbReference>
<dbReference type="Pfam" id="PF01189">
    <property type="entry name" value="Methyltr_RsmB-F"/>
    <property type="match status" value="1"/>
</dbReference>
<dbReference type="Pfam" id="PF17125">
    <property type="entry name" value="Methyltr_RsmF_N"/>
    <property type="match status" value="1"/>
</dbReference>
<dbReference type="Pfam" id="PF13636">
    <property type="entry name" value="Methyltranf_PUA"/>
    <property type="match status" value="1"/>
</dbReference>
<dbReference type="Pfam" id="PF21150">
    <property type="entry name" value="YebU_pre-PUA_dom"/>
    <property type="match status" value="1"/>
</dbReference>
<dbReference type="PRINTS" id="PR02008">
    <property type="entry name" value="RCMTFAMILY"/>
</dbReference>
<dbReference type="SUPFAM" id="SSF53335">
    <property type="entry name" value="S-adenosyl-L-methionine-dependent methyltransferases"/>
    <property type="match status" value="1"/>
</dbReference>
<dbReference type="PROSITE" id="PS01153">
    <property type="entry name" value="NOL1_NOP2_SUN"/>
    <property type="match status" value="1"/>
</dbReference>
<dbReference type="PROSITE" id="PS51686">
    <property type="entry name" value="SAM_MT_RSMB_NOP"/>
    <property type="match status" value="1"/>
</dbReference>
<accession>B4SV89</accession>
<protein>
    <recommendedName>
        <fullName evidence="1">Ribosomal RNA small subunit methyltransferase F</fullName>
        <ecNumber evidence="1">2.1.1.178</ecNumber>
    </recommendedName>
    <alternativeName>
        <fullName evidence="1">16S rRNA m5C1407 methyltransferase</fullName>
    </alternativeName>
    <alternativeName>
        <fullName evidence="1">rRNA (cytosine-C(5)-)-methyltransferase RsmF</fullName>
    </alternativeName>
</protein>
<sequence>MAQHAVYFPDAFLTQMREAMPSTLSFDEFISACQRPLRRSIRINTLKISVADFLALIAPYGWSLTPIPWCHEGFWIERDDEEALPLGSTAEHLSGLFYIQEASSMLPVAALFADDNHPQRVMDMAAAPGSKTTQIAARMGNRGAILANEFSASRVKVLHANISRCGIANTALTHFDGRVFGAALPEMFDAILLDAPCSGEGVVRKDPDALKNWSPESNLDIAATQRELLDSAFHALRPGGTLVYSTCTLNRQENEAVCLWLKETYADAVEFLPLGDLFPDADRALTPEGFLHVFPQIYDCEGFFVARLRKMSSLPAMPAPGYKVGAFPFTPLKGREALHVTQAANAVGLLWDENLHLWQREKEVWLFPAEIESLIGKVRFSRLGIKLAESHNKGYRWQHEATIALACPTHAHAFELSVQEAEEWYRGRDIYPQTPPAADDVLVTFQHQPLGLAKRIGSRIKNSYPRELVRDGKLFTGNS</sequence>
<feature type="chain" id="PRO_0000382579" description="Ribosomal RNA small subunit methyltransferase F">
    <location>
        <begin position="1"/>
        <end position="479"/>
    </location>
</feature>
<feature type="active site" description="Nucleophile" evidence="1">
    <location>
        <position position="247"/>
    </location>
</feature>
<feature type="binding site" evidence="1">
    <location>
        <begin position="125"/>
        <end position="131"/>
    </location>
    <ligand>
        <name>S-adenosyl-L-methionine</name>
        <dbReference type="ChEBI" id="CHEBI:59789"/>
    </ligand>
</feature>
<feature type="binding site" evidence="1">
    <location>
        <position position="149"/>
    </location>
    <ligand>
        <name>S-adenosyl-L-methionine</name>
        <dbReference type="ChEBI" id="CHEBI:59789"/>
    </ligand>
</feature>
<feature type="binding site" evidence="1">
    <location>
        <position position="176"/>
    </location>
    <ligand>
        <name>S-adenosyl-L-methionine</name>
        <dbReference type="ChEBI" id="CHEBI:59789"/>
    </ligand>
</feature>
<feature type="binding site" evidence="1">
    <location>
        <position position="194"/>
    </location>
    <ligand>
        <name>S-adenosyl-L-methionine</name>
        <dbReference type="ChEBI" id="CHEBI:59789"/>
    </ligand>
</feature>
<evidence type="ECO:0000255" key="1">
    <source>
        <dbReference type="HAMAP-Rule" id="MF_01579"/>
    </source>
</evidence>
<evidence type="ECO:0000305" key="2"/>